<comment type="function">
    <text evidence="1">Leech salivary gland peptide with unknown function.</text>
</comment>
<comment type="subcellular location">
    <subcellularLocation>
        <location evidence="1">Secreted</location>
    </subcellularLocation>
</comment>
<comment type="tissue specificity">
    <text evidence="1">Expressed in salivary glands. Highly expressed in the head, body and tail with a 2-3-fold higher expression in the head.</text>
</comment>
<comment type="miscellaneous">
    <text evidence="1">Does not show effect on voltage-gated calcium channels, potassium channels, and tetrodotoxin-sensitive sodium channels. Does not show activity on Nav1.7/SCN9A, and shows very weak activity on cation channel TRPA1.</text>
</comment>
<comment type="similarity">
    <text evidence="4">Belongs to the annelide toxin family.</text>
</comment>
<feature type="signal peptide" evidence="2">
    <location>
        <begin position="1"/>
        <end position="21"/>
    </location>
</feature>
<feature type="propeptide" id="PRO_0000452232" evidence="1">
    <location>
        <begin position="22"/>
        <end position="25"/>
    </location>
</feature>
<feature type="peptide" id="PRO_0000452233" description="Peptide HSTX-X" evidence="1">
    <location>
        <begin position="26"/>
        <end position="51"/>
    </location>
</feature>
<feature type="modified residue" description="Proline amide" evidence="1">
    <location>
        <position position="51"/>
    </location>
</feature>
<feature type="disulfide bond" evidence="1">
    <location>
        <begin position="27"/>
        <end position="42"/>
    </location>
</feature>
<feature type="disulfide bond" evidence="1">
    <location>
        <begin position="33"/>
        <end position="47"/>
    </location>
</feature>
<name>HSTXA_HAESL</name>
<dbReference type="GO" id="GO:0005576">
    <property type="term" value="C:extracellular region"/>
    <property type="evidence" value="ECO:0007669"/>
    <property type="project" value="UniProtKB-SubCell"/>
</dbReference>
<sequence>MMRTLLVFLLLAILAAVLIGNIQVEACKVLTDCNHSNAHSRCIKGRCVLMPG</sequence>
<evidence type="ECO:0000250" key="1">
    <source>
        <dbReference type="UniProtKB" id="A0A2L1DGG0"/>
    </source>
</evidence>
<evidence type="ECO:0000255" key="2"/>
<evidence type="ECO:0000303" key="3">
    <source>
    </source>
</evidence>
<evidence type="ECO:0000305" key="4"/>
<proteinExistence type="inferred from homology"/>
<protein>
    <recommendedName>
        <fullName evidence="3">Peptide HSTX-X</fullName>
    </recommendedName>
</protein>
<reference key="1">
    <citation type="journal article" date="2018" name="Front. Pharmacol.">
        <title>Novel sodium channel inhibitor from leeches.</title>
        <authorList>
            <person name="Wang G."/>
            <person name="Long C."/>
            <person name="Liu W."/>
            <person name="Xu C."/>
            <person name="Zhang M."/>
            <person name="Li Q."/>
            <person name="Lu Q."/>
            <person name="Meng P."/>
            <person name="Li D."/>
            <person name="Rong M."/>
            <person name="Sun Z."/>
            <person name="Luo X."/>
            <person name="Lai R."/>
        </authorList>
    </citation>
    <scope>NUCLEOTIDE SEQUENCE [MRNA]</scope>
    <source>
        <tissue>Salivary gland</tissue>
    </source>
</reference>
<keyword id="KW-0027">Amidation</keyword>
<keyword id="KW-1015">Disulfide bond</keyword>
<keyword id="KW-0964">Secreted</keyword>
<keyword id="KW-0732">Signal</keyword>
<organism>
    <name type="scientific">Haemadipsa sylvestris</name>
    <name type="common">Indian leech</name>
    <dbReference type="NCBI Taxonomy" id="13555"/>
    <lineage>
        <taxon>Eukaryota</taxon>
        <taxon>Metazoa</taxon>
        <taxon>Spiralia</taxon>
        <taxon>Lophotrochozoa</taxon>
        <taxon>Annelida</taxon>
        <taxon>Clitellata</taxon>
        <taxon>Hirudinea</taxon>
        <taxon>Hirudinida</taxon>
        <taxon>Hirudiniformes</taxon>
        <taxon>Haemadipsidae</taxon>
        <taxon>Haemadipsa</taxon>
    </lineage>
</organism>
<accession>P0DUH3</accession>